<comment type="function">
    <text evidence="1">One of the essential components for the initiation of protein synthesis. Stabilizes the binding of IF-2 and IF-3 on the 30S subunit to which N-formylmethionyl-tRNA(fMet) subsequently binds. Helps modulate mRNA selection, yielding the 30S pre-initiation complex (PIC). Upon addition of the 50S ribosomal subunit IF-1, IF-2 and IF-3 are released leaving the mature 70S translation initiation complex.</text>
</comment>
<comment type="subunit">
    <text evidence="1">Component of the 30S ribosomal translation pre-initiation complex which assembles on the 30S ribosome in the order IF-2 and IF-3, IF-1 and N-formylmethionyl-tRNA(fMet); mRNA recruitment can occur at any time during PIC assembly.</text>
</comment>
<comment type="subcellular location">
    <subcellularLocation>
        <location evidence="1">Cytoplasm</location>
    </subcellularLocation>
</comment>
<comment type="similarity">
    <text evidence="1">Belongs to the IF-1 family.</text>
</comment>
<gene>
    <name evidence="1" type="primary">infA</name>
    <name type="ordered locus">HD_0361</name>
</gene>
<dbReference type="EMBL" id="AE017143">
    <property type="protein sequence ID" value="AAP95332.1"/>
    <property type="molecule type" value="Genomic_DNA"/>
</dbReference>
<dbReference type="RefSeq" id="WP_010944385.1">
    <property type="nucleotide sequence ID" value="NC_002940.2"/>
</dbReference>
<dbReference type="SMR" id="Q7VNW5"/>
<dbReference type="STRING" id="233412.HD_0361"/>
<dbReference type="KEGG" id="hdu:HD_0361"/>
<dbReference type="eggNOG" id="COG0361">
    <property type="taxonomic scope" value="Bacteria"/>
</dbReference>
<dbReference type="HOGENOM" id="CLU_151267_1_0_6"/>
<dbReference type="OrthoDB" id="9803250at2"/>
<dbReference type="Proteomes" id="UP000001022">
    <property type="component" value="Chromosome"/>
</dbReference>
<dbReference type="GO" id="GO:0005829">
    <property type="term" value="C:cytosol"/>
    <property type="evidence" value="ECO:0007669"/>
    <property type="project" value="TreeGrafter"/>
</dbReference>
<dbReference type="GO" id="GO:0043022">
    <property type="term" value="F:ribosome binding"/>
    <property type="evidence" value="ECO:0007669"/>
    <property type="project" value="UniProtKB-UniRule"/>
</dbReference>
<dbReference type="GO" id="GO:0019843">
    <property type="term" value="F:rRNA binding"/>
    <property type="evidence" value="ECO:0007669"/>
    <property type="project" value="UniProtKB-UniRule"/>
</dbReference>
<dbReference type="GO" id="GO:0003743">
    <property type="term" value="F:translation initiation factor activity"/>
    <property type="evidence" value="ECO:0007669"/>
    <property type="project" value="UniProtKB-UniRule"/>
</dbReference>
<dbReference type="CDD" id="cd04451">
    <property type="entry name" value="S1_IF1"/>
    <property type="match status" value="1"/>
</dbReference>
<dbReference type="FunFam" id="2.40.50.140:FF:000002">
    <property type="entry name" value="Translation initiation factor IF-1"/>
    <property type="match status" value="1"/>
</dbReference>
<dbReference type="Gene3D" id="2.40.50.140">
    <property type="entry name" value="Nucleic acid-binding proteins"/>
    <property type="match status" value="1"/>
</dbReference>
<dbReference type="HAMAP" id="MF_00075">
    <property type="entry name" value="IF_1"/>
    <property type="match status" value="1"/>
</dbReference>
<dbReference type="InterPro" id="IPR012340">
    <property type="entry name" value="NA-bd_OB-fold"/>
</dbReference>
<dbReference type="InterPro" id="IPR006196">
    <property type="entry name" value="RNA-binding_domain_S1_IF1"/>
</dbReference>
<dbReference type="InterPro" id="IPR003029">
    <property type="entry name" value="S1_domain"/>
</dbReference>
<dbReference type="InterPro" id="IPR004368">
    <property type="entry name" value="TIF_IF1"/>
</dbReference>
<dbReference type="NCBIfam" id="TIGR00008">
    <property type="entry name" value="infA"/>
    <property type="match status" value="1"/>
</dbReference>
<dbReference type="PANTHER" id="PTHR33370">
    <property type="entry name" value="TRANSLATION INITIATION FACTOR IF-1, CHLOROPLASTIC"/>
    <property type="match status" value="1"/>
</dbReference>
<dbReference type="PANTHER" id="PTHR33370:SF1">
    <property type="entry name" value="TRANSLATION INITIATION FACTOR IF-1, CHLOROPLASTIC"/>
    <property type="match status" value="1"/>
</dbReference>
<dbReference type="Pfam" id="PF01176">
    <property type="entry name" value="eIF-1a"/>
    <property type="match status" value="1"/>
</dbReference>
<dbReference type="SMART" id="SM00316">
    <property type="entry name" value="S1"/>
    <property type="match status" value="1"/>
</dbReference>
<dbReference type="SUPFAM" id="SSF50249">
    <property type="entry name" value="Nucleic acid-binding proteins"/>
    <property type="match status" value="1"/>
</dbReference>
<dbReference type="PROSITE" id="PS50832">
    <property type="entry name" value="S1_IF1_TYPE"/>
    <property type="match status" value="1"/>
</dbReference>
<organism>
    <name type="scientific">Haemophilus ducreyi (strain 35000HP / ATCC 700724)</name>
    <dbReference type="NCBI Taxonomy" id="233412"/>
    <lineage>
        <taxon>Bacteria</taxon>
        <taxon>Pseudomonadati</taxon>
        <taxon>Pseudomonadota</taxon>
        <taxon>Gammaproteobacteria</taxon>
        <taxon>Pasteurellales</taxon>
        <taxon>Pasteurellaceae</taxon>
        <taxon>Haemophilus</taxon>
    </lineage>
</organism>
<protein>
    <recommendedName>
        <fullName evidence="1">Translation initiation factor IF-1</fullName>
    </recommendedName>
</protein>
<keyword id="KW-0963">Cytoplasm</keyword>
<keyword id="KW-0396">Initiation factor</keyword>
<keyword id="KW-0648">Protein biosynthesis</keyword>
<keyword id="KW-1185">Reference proteome</keyword>
<keyword id="KW-0694">RNA-binding</keyword>
<keyword id="KW-0699">rRNA-binding</keyword>
<accession>Q7VNW5</accession>
<feature type="chain" id="PRO_0000095796" description="Translation initiation factor IF-1">
    <location>
        <begin position="1"/>
        <end position="72"/>
    </location>
</feature>
<feature type="domain" description="S1-like" evidence="1">
    <location>
        <begin position="1"/>
        <end position="72"/>
    </location>
</feature>
<proteinExistence type="inferred from homology"/>
<sequence length="72" mass="8267">MAKEDCIEMQGTILETLPNTMFRVELENGHIVAAHISGKMRKNYIRILTGDKVTVEMTPYDLSKARIIFRAR</sequence>
<name>IF1_HAEDU</name>
<reference key="1">
    <citation type="submission" date="2003-06" db="EMBL/GenBank/DDBJ databases">
        <title>The complete genome sequence of Haemophilus ducreyi.</title>
        <authorList>
            <person name="Munson R.S. Jr."/>
            <person name="Ray W.C."/>
            <person name="Mahairas G."/>
            <person name="Sabo P."/>
            <person name="Mungur R."/>
            <person name="Johnson L."/>
            <person name="Nguyen D."/>
            <person name="Wang J."/>
            <person name="Forst C."/>
            <person name="Hood L."/>
        </authorList>
    </citation>
    <scope>NUCLEOTIDE SEQUENCE [LARGE SCALE GENOMIC DNA]</scope>
    <source>
        <strain>35000HP / ATCC 700724</strain>
    </source>
</reference>
<evidence type="ECO:0000255" key="1">
    <source>
        <dbReference type="HAMAP-Rule" id="MF_00075"/>
    </source>
</evidence>